<organism>
    <name type="scientific">Xanthomonas oryzae pv. oryzae (strain PXO99A)</name>
    <dbReference type="NCBI Taxonomy" id="360094"/>
    <lineage>
        <taxon>Bacteria</taxon>
        <taxon>Pseudomonadati</taxon>
        <taxon>Pseudomonadota</taxon>
        <taxon>Gammaproteobacteria</taxon>
        <taxon>Lysobacterales</taxon>
        <taxon>Lysobacteraceae</taxon>
        <taxon>Xanthomonas</taxon>
    </lineage>
</organism>
<gene>
    <name evidence="1" type="primary">pqqC</name>
    <name type="ordered locus">PXO_01590</name>
</gene>
<dbReference type="EC" id="1.3.3.11" evidence="1"/>
<dbReference type="EMBL" id="CP000967">
    <property type="protein sequence ID" value="ACD59800.1"/>
    <property type="molecule type" value="Genomic_DNA"/>
</dbReference>
<dbReference type="RefSeq" id="WP_012445333.1">
    <property type="nucleotide sequence ID" value="NC_010717.2"/>
</dbReference>
<dbReference type="SMR" id="B2SSW1"/>
<dbReference type="KEGG" id="xop:PXO_01590"/>
<dbReference type="eggNOG" id="COG5424">
    <property type="taxonomic scope" value="Bacteria"/>
</dbReference>
<dbReference type="HOGENOM" id="CLU_080136_0_0_6"/>
<dbReference type="UniPathway" id="UPA00539"/>
<dbReference type="Proteomes" id="UP000001740">
    <property type="component" value="Chromosome"/>
</dbReference>
<dbReference type="GO" id="GO:0033732">
    <property type="term" value="F:pyrroloquinoline-quinone synthase activity"/>
    <property type="evidence" value="ECO:0007669"/>
    <property type="project" value="UniProtKB-EC"/>
</dbReference>
<dbReference type="GO" id="GO:0018189">
    <property type="term" value="P:pyrroloquinoline quinone biosynthetic process"/>
    <property type="evidence" value="ECO:0007669"/>
    <property type="project" value="UniProtKB-UniRule"/>
</dbReference>
<dbReference type="GO" id="GO:0006790">
    <property type="term" value="P:sulfur compound metabolic process"/>
    <property type="evidence" value="ECO:0007669"/>
    <property type="project" value="UniProtKB-ARBA"/>
</dbReference>
<dbReference type="Gene3D" id="1.20.910.10">
    <property type="entry name" value="Heme oxygenase-like"/>
    <property type="match status" value="1"/>
</dbReference>
<dbReference type="HAMAP" id="MF_00654">
    <property type="entry name" value="PQQ_syn_PqqC"/>
    <property type="match status" value="1"/>
</dbReference>
<dbReference type="InterPro" id="IPR016084">
    <property type="entry name" value="Haem_Oase-like_multi-hlx"/>
</dbReference>
<dbReference type="InterPro" id="IPR011845">
    <property type="entry name" value="PqqC"/>
</dbReference>
<dbReference type="InterPro" id="IPR039068">
    <property type="entry name" value="PqqC-like"/>
</dbReference>
<dbReference type="InterPro" id="IPR004305">
    <property type="entry name" value="Thiaminase-2/PQQC"/>
</dbReference>
<dbReference type="NCBIfam" id="TIGR02111">
    <property type="entry name" value="PQQ_syn_pqqC"/>
    <property type="match status" value="1"/>
</dbReference>
<dbReference type="PANTHER" id="PTHR40279:SF3">
    <property type="entry name" value="4-AMINOBENZOATE SYNTHASE"/>
    <property type="match status" value="1"/>
</dbReference>
<dbReference type="PANTHER" id="PTHR40279">
    <property type="entry name" value="PQQC-LIKE PROTEIN"/>
    <property type="match status" value="1"/>
</dbReference>
<dbReference type="Pfam" id="PF03070">
    <property type="entry name" value="TENA_THI-4"/>
    <property type="match status" value="1"/>
</dbReference>
<dbReference type="SUPFAM" id="SSF48613">
    <property type="entry name" value="Heme oxygenase-like"/>
    <property type="match status" value="1"/>
</dbReference>
<evidence type="ECO:0000255" key="1">
    <source>
        <dbReference type="HAMAP-Rule" id="MF_00654"/>
    </source>
</evidence>
<keyword id="KW-0560">Oxidoreductase</keyword>
<keyword id="KW-0884">PQQ biosynthesis</keyword>
<reference key="1">
    <citation type="journal article" date="2008" name="BMC Genomics">
        <title>Genome sequence and rapid evolution of the rice pathogen Xanthomonas oryzae pv. oryzae PXO99A.</title>
        <authorList>
            <person name="Salzberg S.L."/>
            <person name="Sommer D.D."/>
            <person name="Schatz M.C."/>
            <person name="Phillippy A.M."/>
            <person name="Rabinowicz P.D."/>
            <person name="Tsuge S."/>
            <person name="Furutani A."/>
            <person name="Ochiai H."/>
            <person name="Delcher A.L."/>
            <person name="Kelley D."/>
            <person name="Madupu R."/>
            <person name="Puiu D."/>
            <person name="Radune D."/>
            <person name="Shumway M."/>
            <person name="Trapnell C."/>
            <person name="Aparna G."/>
            <person name="Jha G."/>
            <person name="Pandey A."/>
            <person name="Patil P.B."/>
            <person name="Ishihara H."/>
            <person name="Meyer D.F."/>
            <person name="Szurek B."/>
            <person name="Verdier V."/>
            <person name="Koebnik R."/>
            <person name="Dow J.M."/>
            <person name="Ryan R.P."/>
            <person name="Hirata H."/>
            <person name="Tsuyumu S."/>
            <person name="Won Lee S."/>
            <person name="Seo Y.-S."/>
            <person name="Sriariyanum M."/>
            <person name="Ronald P.C."/>
            <person name="Sonti R.V."/>
            <person name="Van Sluys M.-A."/>
            <person name="Leach J.E."/>
            <person name="White F.F."/>
            <person name="Bogdanove A.J."/>
        </authorList>
    </citation>
    <scope>NUCLEOTIDE SEQUENCE [LARGE SCALE GENOMIC DNA]</scope>
    <source>
        <strain>PXO99A</strain>
    </source>
</reference>
<name>PQQC_XANOP</name>
<accession>B2SSW1</accession>
<sequence length="250" mass="28027">MSALLSPDQLEADLRAIGARLYHDQHPFHALLHHGKLDRGQVQAWALNRFEYQRCIPLKDAAILARMEDPALRRIWRQRIVDHDGNSTTDGGIARWLHLTDALGLDRTLVESGRALLPGTRFAVQAYLQFVSEKSLLEAIASSLTELFAPNIIGQRVAGMLKHYDFVSSDALAYFEHRLTEAPRDSDFALDYVKQHADTVEKQALVKAALHFKCSVLWAQLDALHVAYVTPGIVWPDAFVPDRDASRVAA</sequence>
<feature type="chain" id="PRO_1000131182" description="Pyrroloquinoline-quinone synthase">
    <location>
        <begin position="1"/>
        <end position="250"/>
    </location>
</feature>
<protein>
    <recommendedName>
        <fullName evidence="1">Pyrroloquinoline-quinone synthase</fullName>
        <ecNumber evidence="1">1.3.3.11</ecNumber>
    </recommendedName>
    <alternativeName>
        <fullName evidence="1">Coenzyme PQQ synthesis protein C</fullName>
    </alternativeName>
    <alternativeName>
        <fullName evidence="1">Pyrroloquinoline quinone biosynthesis protein C</fullName>
    </alternativeName>
</protein>
<proteinExistence type="inferred from homology"/>
<comment type="function">
    <text evidence="1">Ring cyclization and eight-electron oxidation of 3a-(2-amino-2-carboxyethyl)-4,5-dioxo-4,5,6,7,8,9-hexahydroquinoline-7,9-dicarboxylic-acid to PQQ.</text>
</comment>
<comment type="catalytic activity">
    <reaction evidence="1">
        <text>6-(2-amino-2-carboxyethyl)-7,8-dioxo-1,2,3,4,7,8-hexahydroquinoline-2,4-dicarboxylate + 3 O2 = pyrroloquinoline quinone + 2 H2O2 + 2 H2O + H(+)</text>
        <dbReference type="Rhea" id="RHEA:10692"/>
        <dbReference type="ChEBI" id="CHEBI:15377"/>
        <dbReference type="ChEBI" id="CHEBI:15378"/>
        <dbReference type="ChEBI" id="CHEBI:15379"/>
        <dbReference type="ChEBI" id="CHEBI:16240"/>
        <dbReference type="ChEBI" id="CHEBI:58442"/>
        <dbReference type="ChEBI" id="CHEBI:58778"/>
        <dbReference type="EC" id="1.3.3.11"/>
    </reaction>
</comment>
<comment type="pathway">
    <text evidence="1">Cofactor biosynthesis; pyrroloquinoline quinone biosynthesis.</text>
</comment>
<comment type="similarity">
    <text evidence="1">Belongs to the PqqC family.</text>
</comment>